<proteinExistence type="inferred from homology"/>
<organism>
    <name type="scientific">Shigella flexneri serotype 5b (strain 8401)</name>
    <dbReference type="NCBI Taxonomy" id="373384"/>
    <lineage>
        <taxon>Bacteria</taxon>
        <taxon>Pseudomonadati</taxon>
        <taxon>Pseudomonadota</taxon>
        <taxon>Gammaproteobacteria</taxon>
        <taxon>Enterobacterales</taxon>
        <taxon>Enterobacteriaceae</taxon>
        <taxon>Shigella</taxon>
    </lineage>
</organism>
<feature type="chain" id="PRO_0000273856" description="Large ribosomal subunit protein uL30">
    <location>
        <begin position="1"/>
        <end position="59"/>
    </location>
</feature>
<reference key="1">
    <citation type="journal article" date="2006" name="BMC Genomics">
        <title>Complete genome sequence of Shigella flexneri 5b and comparison with Shigella flexneri 2a.</title>
        <authorList>
            <person name="Nie H."/>
            <person name="Yang F."/>
            <person name="Zhang X."/>
            <person name="Yang J."/>
            <person name="Chen L."/>
            <person name="Wang J."/>
            <person name="Xiong Z."/>
            <person name="Peng J."/>
            <person name="Sun L."/>
            <person name="Dong J."/>
            <person name="Xue Y."/>
            <person name="Xu X."/>
            <person name="Chen S."/>
            <person name="Yao Z."/>
            <person name="Shen Y."/>
            <person name="Jin Q."/>
        </authorList>
    </citation>
    <scope>NUCLEOTIDE SEQUENCE [LARGE SCALE GENOMIC DNA]</scope>
    <source>
        <strain>8401</strain>
    </source>
</reference>
<protein>
    <recommendedName>
        <fullName evidence="1">Large ribosomal subunit protein uL30</fullName>
    </recommendedName>
    <alternativeName>
        <fullName evidence="2">50S ribosomal protein L30</fullName>
    </alternativeName>
</protein>
<comment type="subunit">
    <text evidence="1">Part of the 50S ribosomal subunit.</text>
</comment>
<comment type="similarity">
    <text evidence="1">Belongs to the universal ribosomal protein uL30 family.</text>
</comment>
<dbReference type="EMBL" id="CP000266">
    <property type="protein sequence ID" value="ABF05365.1"/>
    <property type="molecule type" value="Genomic_DNA"/>
</dbReference>
<dbReference type="RefSeq" id="WP_001140433.1">
    <property type="nucleotide sequence ID" value="NC_008258.1"/>
</dbReference>
<dbReference type="SMR" id="Q0T000"/>
<dbReference type="GeneID" id="93778685"/>
<dbReference type="KEGG" id="sfv:SFV_3322"/>
<dbReference type="HOGENOM" id="CLU_131047_1_4_6"/>
<dbReference type="Proteomes" id="UP000000659">
    <property type="component" value="Chromosome"/>
</dbReference>
<dbReference type="GO" id="GO:0022625">
    <property type="term" value="C:cytosolic large ribosomal subunit"/>
    <property type="evidence" value="ECO:0007669"/>
    <property type="project" value="TreeGrafter"/>
</dbReference>
<dbReference type="GO" id="GO:0003735">
    <property type="term" value="F:structural constituent of ribosome"/>
    <property type="evidence" value="ECO:0007669"/>
    <property type="project" value="InterPro"/>
</dbReference>
<dbReference type="GO" id="GO:0006412">
    <property type="term" value="P:translation"/>
    <property type="evidence" value="ECO:0007669"/>
    <property type="project" value="UniProtKB-UniRule"/>
</dbReference>
<dbReference type="CDD" id="cd01658">
    <property type="entry name" value="Ribosomal_L30"/>
    <property type="match status" value="1"/>
</dbReference>
<dbReference type="FunFam" id="3.30.1390.20:FF:000001">
    <property type="entry name" value="50S ribosomal protein L30"/>
    <property type="match status" value="1"/>
</dbReference>
<dbReference type="Gene3D" id="3.30.1390.20">
    <property type="entry name" value="Ribosomal protein L30, ferredoxin-like fold domain"/>
    <property type="match status" value="1"/>
</dbReference>
<dbReference type="HAMAP" id="MF_01371_B">
    <property type="entry name" value="Ribosomal_uL30_B"/>
    <property type="match status" value="1"/>
</dbReference>
<dbReference type="InterPro" id="IPR036919">
    <property type="entry name" value="Ribo_uL30_ferredoxin-like_sf"/>
</dbReference>
<dbReference type="InterPro" id="IPR005996">
    <property type="entry name" value="Ribosomal_uL30_bac-type"/>
</dbReference>
<dbReference type="InterPro" id="IPR018038">
    <property type="entry name" value="Ribosomal_uL30_CS"/>
</dbReference>
<dbReference type="InterPro" id="IPR016082">
    <property type="entry name" value="Ribosomal_uL30_ferredoxin-like"/>
</dbReference>
<dbReference type="NCBIfam" id="TIGR01308">
    <property type="entry name" value="rpmD_bact"/>
    <property type="match status" value="1"/>
</dbReference>
<dbReference type="PANTHER" id="PTHR15892:SF2">
    <property type="entry name" value="LARGE RIBOSOMAL SUBUNIT PROTEIN UL30M"/>
    <property type="match status" value="1"/>
</dbReference>
<dbReference type="PANTHER" id="PTHR15892">
    <property type="entry name" value="MITOCHONDRIAL RIBOSOMAL PROTEIN L30"/>
    <property type="match status" value="1"/>
</dbReference>
<dbReference type="Pfam" id="PF00327">
    <property type="entry name" value="Ribosomal_L30"/>
    <property type="match status" value="1"/>
</dbReference>
<dbReference type="PIRSF" id="PIRSF002211">
    <property type="entry name" value="Ribosomal_L30_bac-type"/>
    <property type="match status" value="1"/>
</dbReference>
<dbReference type="SUPFAM" id="SSF55129">
    <property type="entry name" value="Ribosomal protein L30p/L7e"/>
    <property type="match status" value="1"/>
</dbReference>
<dbReference type="PROSITE" id="PS00634">
    <property type="entry name" value="RIBOSOMAL_L30"/>
    <property type="match status" value="1"/>
</dbReference>
<gene>
    <name evidence="1" type="primary">rpmD</name>
    <name type="ordered locus">SFV_3322</name>
</gene>
<name>RL30_SHIF8</name>
<accession>Q0T000</accession>
<evidence type="ECO:0000255" key="1">
    <source>
        <dbReference type="HAMAP-Rule" id="MF_01371"/>
    </source>
</evidence>
<evidence type="ECO:0000305" key="2"/>
<sequence length="59" mass="6542">MAKTIKITQTRSAIGRLPKHKATLLGLGLRRIGHTVEREDTPAIRGMINAVSFMVKVEE</sequence>
<keyword id="KW-0687">Ribonucleoprotein</keyword>
<keyword id="KW-0689">Ribosomal protein</keyword>